<proteinExistence type="inferred from homology"/>
<gene>
    <name evidence="1" type="primary">rnhB</name>
    <name type="ordered locus">BPEN_293</name>
</gene>
<sequence length="217" mass="24017">MTTMLSIVQVKNNEIPKTLSIKKFKLIAGVDESGCGSLVGSVIAAAVILHSIQPISGLADSKTLNKNKRLNLYKNIIKNALAWSIGYADVTEIDRSNILEARLLAMKRAVHNLSVKPDLILIDGNRSPGFTEIPYQCFNKGDARIAIISAASIIAKVTRDQDMIILDKQYPKYGFAQNKGYPTFFHLKQLALYGPISQHRKSFAPVKHVISDINRKL</sequence>
<accession>Q493B8</accession>
<feature type="chain" id="PRO_0000235702" description="Ribonuclease HII">
    <location>
        <begin position="1"/>
        <end position="217"/>
    </location>
</feature>
<feature type="domain" description="RNase H type-2" evidence="2">
    <location>
        <begin position="25"/>
        <end position="215"/>
    </location>
</feature>
<feature type="binding site" evidence="1">
    <location>
        <position position="31"/>
    </location>
    <ligand>
        <name>a divalent metal cation</name>
        <dbReference type="ChEBI" id="CHEBI:60240"/>
    </ligand>
</feature>
<feature type="binding site" evidence="1">
    <location>
        <position position="32"/>
    </location>
    <ligand>
        <name>a divalent metal cation</name>
        <dbReference type="ChEBI" id="CHEBI:60240"/>
    </ligand>
</feature>
<feature type="binding site" evidence="1">
    <location>
        <position position="123"/>
    </location>
    <ligand>
        <name>a divalent metal cation</name>
        <dbReference type="ChEBI" id="CHEBI:60240"/>
    </ligand>
</feature>
<organism>
    <name type="scientific">Blochmanniella pennsylvanica (strain BPEN)</name>
    <dbReference type="NCBI Taxonomy" id="291272"/>
    <lineage>
        <taxon>Bacteria</taxon>
        <taxon>Pseudomonadati</taxon>
        <taxon>Pseudomonadota</taxon>
        <taxon>Gammaproteobacteria</taxon>
        <taxon>Enterobacterales</taxon>
        <taxon>Enterobacteriaceae</taxon>
        <taxon>ant endosymbionts</taxon>
        <taxon>Candidatus Blochmanniella</taxon>
    </lineage>
</organism>
<dbReference type="EC" id="3.1.26.4" evidence="1"/>
<dbReference type="EMBL" id="CP000016">
    <property type="protein sequence ID" value="AAZ40924.1"/>
    <property type="molecule type" value="Genomic_DNA"/>
</dbReference>
<dbReference type="RefSeq" id="WP_011282831.1">
    <property type="nucleotide sequence ID" value="NC_007292.1"/>
</dbReference>
<dbReference type="SMR" id="Q493B8"/>
<dbReference type="STRING" id="291272.BPEN_293"/>
<dbReference type="KEGG" id="bpn:BPEN_293"/>
<dbReference type="eggNOG" id="COG0164">
    <property type="taxonomic scope" value="Bacteria"/>
</dbReference>
<dbReference type="HOGENOM" id="CLU_036532_3_2_6"/>
<dbReference type="Proteomes" id="UP000007794">
    <property type="component" value="Chromosome"/>
</dbReference>
<dbReference type="GO" id="GO:0005737">
    <property type="term" value="C:cytoplasm"/>
    <property type="evidence" value="ECO:0007669"/>
    <property type="project" value="UniProtKB-SubCell"/>
</dbReference>
<dbReference type="GO" id="GO:0032299">
    <property type="term" value="C:ribonuclease H2 complex"/>
    <property type="evidence" value="ECO:0007669"/>
    <property type="project" value="TreeGrafter"/>
</dbReference>
<dbReference type="GO" id="GO:0030145">
    <property type="term" value="F:manganese ion binding"/>
    <property type="evidence" value="ECO:0007669"/>
    <property type="project" value="UniProtKB-UniRule"/>
</dbReference>
<dbReference type="GO" id="GO:0003723">
    <property type="term" value="F:RNA binding"/>
    <property type="evidence" value="ECO:0007669"/>
    <property type="project" value="InterPro"/>
</dbReference>
<dbReference type="GO" id="GO:0004523">
    <property type="term" value="F:RNA-DNA hybrid ribonuclease activity"/>
    <property type="evidence" value="ECO:0007669"/>
    <property type="project" value="UniProtKB-UniRule"/>
</dbReference>
<dbReference type="GO" id="GO:0043137">
    <property type="term" value="P:DNA replication, removal of RNA primer"/>
    <property type="evidence" value="ECO:0007669"/>
    <property type="project" value="TreeGrafter"/>
</dbReference>
<dbReference type="GO" id="GO:0006298">
    <property type="term" value="P:mismatch repair"/>
    <property type="evidence" value="ECO:0007669"/>
    <property type="project" value="TreeGrafter"/>
</dbReference>
<dbReference type="CDD" id="cd07182">
    <property type="entry name" value="RNase_HII_bacteria_HII_like"/>
    <property type="match status" value="1"/>
</dbReference>
<dbReference type="FunFam" id="3.30.420.10:FF:000006">
    <property type="entry name" value="Ribonuclease HII"/>
    <property type="match status" value="1"/>
</dbReference>
<dbReference type="Gene3D" id="3.30.420.10">
    <property type="entry name" value="Ribonuclease H-like superfamily/Ribonuclease H"/>
    <property type="match status" value="1"/>
</dbReference>
<dbReference type="HAMAP" id="MF_00052_B">
    <property type="entry name" value="RNase_HII_B"/>
    <property type="match status" value="1"/>
</dbReference>
<dbReference type="InterPro" id="IPR022898">
    <property type="entry name" value="RNase_HII"/>
</dbReference>
<dbReference type="InterPro" id="IPR001352">
    <property type="entry name" value="RNase_HII/HIII"/>
</dbReference>
<dbReference type="InterPro" id="IPR024567">
    <property type="entry name" value="RNase_HII/HIII_dom"/>
</dbReference>
<dbReference type="InterPro" id="IPR012337">
    <property type="entry name" value="RNaseH-like_sf"/>
</dbReference>
<dbReference type="InterPro" id="IPR036397">
    <property type="entry name" value="RNaseH_sf"/>
</dbReference>
<dbReference type="NCBIfam" id="NF000595">
    <property type="entry name" value="PRK00015.1-3"/>
    <property type="match status" value="1"/>
</dbReference>
<dbReference type="NCBIfam" id="NF000596">
    <property type="entry name" value="PRK00015.1-4"/>
    <property type="match status" value="1"/>
</dbReference>
<dbReference type="PANTHER" id="PTHR10954">
    <property type="entry name" value="RIBONUCLEASE H2 SUBUNIT A"/>
    <property type="match status" value="1"/>
</dbReference>
<dbReference type="PANTHER" id="PTHR10954:SF18">
    <property type="entry name" value="RIBONUCLEASE HII"/>
    <property type="match status" value="1"/>
</dbReference>
<dbReference type="Pfam" id="PF01351">
    <property type="entry name" value="RNase_HII"/>
    <property type="match status" value="1"/>
</dbReference>
<dbReference type="SUPFAM" id="SSF53098">
    <property type="entry name" value="Ribonuclease H-like"/>
    <property type="match status" value="1"/>
</dbReference>
<dbReference type="PROSITE" id="PS51975">
    <property type="entry name" value="RNASE_H_2"/>
    <property type="match status" value="1"/>
</dbReference>
<evidence type="ECO:0000255" key="1">
    <source>
        <dbReference type="HAMAP-Rule" id="MF_00052"/>
    </source>
</evidence>
<evidence type="ECO:0000255" key="2">
    <source>
        <dbReference type="PROSITE-ProRule" id="PRU01319"/>
    </source>
</evidence>
<name>RNH2_BLOPB</name>
<protein>
    <recommendedName>
        <fullName evidence="1">Ribonuclease HII</fullName>
        <shortName evidence="1">RNase HII</shortName>
        <ecNumber evidence="1">3.1.26.4</ecNumber>
    </recommendedName>
</protein>
<reference key="1">
    <citation type="journal article" date="2005" name="Genome Res.">
        <title>Genome sequence of Blochmannia pennsylvanicus indicates parallel evolutionary trends among bacterial mutualists of insects.</title>
        <authorList>
            <person name="Degnan P.H."/>
            <person name="Lazarus A.B."/>
            <person name="Wernegreen J.J."/>
        </authorList>
    </citation>
    <scope>NUCLEOTIDE SEQUENCE [LARGE SCALE GENOMIC DNA]</scope>
    <source>
        <strain>BPEN</strain>
    </source>
</reference>
<keyword id="KW-0963">Cytoplasm</keyword>
<keyword id="KW-0255">Endonuclease</keyword>
<keyword id="KW-0378">Hydrolase</keyword>
<keyword id="KW-0464">Manganese</keyword>
<keyword id="KW-0479">Metal-binding</keyword>
<keyword id="KW-0540">Nuclease</keyword>
<keyword id="KW-1185">Reference proteome</keyword>
<comment type="function">
    <text evidence="1">Endonuclease that specifically degrades the RNA of RNA-DNA hybrids.</text>
</comment>
<comment type="catalytic activity">
    <reaction evidence="1">
        <text>Endonucleolytic cleavage to 5'-phosphomonoester.</text>
        <dbReference type="EC" id="3.1.26.4"/>
    </reaction>
</comment>
<comment type="cofactor">
    <cofactor evidence="1">
        <name>Mn(2+)</name>
        <dbReference type="ChEBI" id="CHEBI:29035"/>
    </cofactor>
    <cofactor evidence="1">
        <name>Mg(2+)</name>
        <dbReference type="ChEBI" id="CHEBI:18420"/>
    </cofactor>
    <text evidence="1">Manganese or magnesium. Binds 1 divalent metal ion per monomer in the absence of substrate. May bind a second metal ion after substrate binding.</text>
</comment>
<comment type="subcellular location">
    <subcellularLocation>
        <location evidence="1">Cytoplasm</location>
    </subcellularLocation>
</comment>
<comment type="similarity">
    <text evidence="1">Belongs to the RNase HII family.</text>
</comment>